<name>CO8G_HUMAN</name>
<dbReference type="EMBL" id="M17263">
    <property type="protein sequence ID" value="AAA51888.1"/>
    <property type="molecule type" value="mRNA"/>
</dbReference>
<dbReference type="EMBL" id="M17999">
    <property type="protein sequence ID" value="AAA51863.1"/>
    <property type="molecule type" value="mRNA"/>
</dbReference>
<dbReference type="EMBL" id="X06465">
    <property type="protein sequence ID" value="CAA29773.1"/>
    <property type="molecule type" value="mRNA"/>
</dbReference>
<dbReference type="EMBL" id="U08198">
    <property type="protein sequence ID" value="AAA18482.1"/>
    <property type="molecule type" value="Genomic_DNA"/>
</dbReference>
<dbReference type="EMBL" id="AL807752">
    <property type="status" value="NOT_ANNOTATED_CDS"/>
    <property type="molecule type" value="Genomic_DNA"/>
</dbReference>
<dbReference type="EMBL" id="CH471090">
    <property type="protein sequence ID" value="EAW88316.1"/>
    <property type="molecule type" value="Genomic_DNA"/>
</dbReference>
<dbReference type="EMBL" id="BC113624">
    <property type="protein sequence ID" value="AAI13625.1"/>
    <property type="molecule type" value="mRNA"/>
</dbReference>
<dbReference type="EMBL" id="BC113626">
    <property type="protein sequence ID" value="AAI13627.1"/>
    <property type="molecule type" value="mRNA"/>
</dbReference>
<dbReference type="CCDS" id="CCDS7017.1"/>
<dbReference type="PIR" id="A27487">
    <property type="entry name" value="C8HUG"/>
</dbReference>
<dbReference type="RefSeq" id="NP_000597.2">
    <property type="nucleotide sequence ID" value="NM_000606.3"/>
</dbReference>
<dbReference type="PDB" id="1IW2">
    <property type="method" value="X-ray"/>
    <property type="resolution" value="1.90 A"/>
    <property type="chains" value="A=21-202"/>
</dbReference>
<dbReference type="PDB" id="1LF7">
    <property type="method" value="X-ray"/>
    <property type="resolution" value="1.20 A"/>
    <property type="chains" value="A=21-202"/>
</dbReference>
<dbReference type="PDB" id="2OVA">
    <property type="method" value="X-ray"/>
    <property type="resolution" value="1.50 A"/>
    <property type="chains" value="A=21-202"/>
</dbReference>
<dbReference type="PDB" id="2OVD">
    <property type="method" value="X-ray"/>
    <property type="resolution" value="1.80 A"/>
    <property type="chains" value="A=21-202"/>
</dbReference>
<dbReference type="PDB" id="2OVE">
    <property type="method" value="X-ray"/>
    <property type="resolution" value="2.00 A"/>
    <property type="chains" value="A=21-202"/>
</dbReference>
<dbReference type="PDB" id="2QOS">
    <property type="method" value="X-ray"/>
    <property type="resolution" value="1.81 A"/>
    <property type="chains" value="C=30-202"/>
</dbReference>
<dbReference type="PDB" id="2RD7">
    <property type="method" value="X-ray"/>
    <property type="resolution" value="2.15 A"/>
    <property type="chains" value="C=21-202"/>
</dbReference>
<dbReference type="PDB" id="3OJY">
    <property type="method" value="X-ray"/>
    <property type="resolution" value="2.51 A"/>
    <property type="chains" value="C=21-202"/>
</dbReference>
<dbReference type="PDB" id="6H03">
    <property type="method" value="EM"/>
    <property type="resolution" value="5.60 A"/>
    <property type="chains" value="E=21-202"/>
</dbReference>
<dbReference type="PDB" id="6H04">
    <property type="method" value="EM"/>
    <property type="resolution" value="5.60 A"/>
    <property type="chains" value="E=21-202"/>
</dbReference>
<dbReference type="PDB" id="7NYC">
    <property type="method" value="EM"/>
    <property type="resolution" value="3.50 A"/>
    <property type="chains" value="F=21-202"/>
</dbReference>
<dbReference type="PDB" id="7NYD">
    <property type="method" value="EM"/>
    <property type="resolution" value="3.30 A"/>
    <property type="chains" value="F=21-202"/>
</dbReference>
<dbReference type="PDB" id="8B0F">
    <property type="method" value="EM"/>
    <property type="resolution" value="3.00 A"/>
    <property type="chains" value="F=1-202"/>
</dbReference>
<dbReference type="PDB" id="8B0G">
    <property type="method" value="EM"/>
    <property type="resolution" value="3.30 A"/>
    <property type="chains" value="F=1-202"/>
</dbReference>
<dbReference type="PDB" id="8B0H">
    <property type="method" value="EM"/>
    <property type="resolution" value="3.30 A"/>
    <property type="chains" value="F=1-202"/>
</dbReference>
<dbReference type="PDBsum" id="1IW2"/>
<dbReference type="PDBsum" id="1LF7"/>
<dbReference type="PDBsum" id="2OVA"/>
<dbReference type="PDBsum" id="2OVD"/>
<dbReference type="PDBsum" id="2OVE"/>
<dbReference type="PDBsum" id="2QOS"/>
<dbReference type="PDBsum" id="2RD7"/>
<dbReference type="PDBsum" id="3OJY"/>
<dbReference type="PDBsum" id="6H03"/>
<dbReference type="PDBsum" id="6H04"/>
<dbReference type="PDBsum" id="7NYC"/>
<dbReference type="PDBsum" id="7NYD"/>
<dbReference type="PDBsum" id="8B0F"/>
<dbReference type="PDBsum" id="8B0G"/>
<dbReference type="PDBsum" id="8B0H"/>
<dbReference type="EMDB" id="EMD-0106"/>
<dbReference type="EMDB" id="EMD-0107"/>
<dbReference type="EMDB" id="EMD-12649"/>
<dbReference type="EMDB" id="EMD-12650"/>
<dbReference type="EMDB" id="EMD-12651"/>
<dbReference type="EMDB" id="EMD-15779"/>
<dbReference type="EMDB" id="EMD-15780"/>
<dbReference type="EMDB" id="EMD-15781"/>
<dbReference type="EMDB" id="EMD-3289"/>
<dbReference type="SMR" id="P07360"/>
<dbReference type="BioGRID" id="107194">
    <property type="interactions" value="11"/>
</dbReference>
<dbReference type="ComplexPortal" id="CPX-6159">
    <property type="entry name" value="Membrane attack complex"/>
</dbReference>
<dbReference type="FunCoup" id="P07360">
    <property type="interactions" value="146"/>
</dbReference>
<dbReference type="IntAct" id="P07360">
    <property type="interactions" value="9"/>
</dbReference>
<dbReference type="STRING" id="9606.ENSP00000360697"/>
<dbReference type="DrugBank" id="DB04272">
    <property type="generic name" value="Citric acid"/>
</dbReference>
<dbReference type="DrugBank" id="DB03017">
    <property type="generic name" value="Lauric acid"/>
</dbReference>
<dbReference type="DrugBank" id="DB01593">
    <property type="generic name" value="Zinc"/>
</dbReference>
<dbReference type="DrugBank" id="DB14487">
    <property type="generic name" value="Zinc acetate"/>
</dbReference>
<dbReference type="iPTMnet" id="P07360"/>
<dbReference type="PhosphoSitePlus" id="P07360"/>
<dbReference type="BioMuta" id="C8G"/>
<dbReference type="jPOST" id="P07360"/>
<dbReference type="MassIVE" id="P07360"/>
<dbReference type="PaxDb" id="9606-ENSP00000224181"/>
<dbReference type="PeptideAtlas" id="P07360"/>
<dbReference type="ProteomicsDB" id="52000"/>
<dbReference type="Antibodypedia" id="18835">
    <property type="antibodies" value="78 antibodies from 19 providers"/>
</dbReference>
<dbReference type="DNASU" id="733"/>
<dbReference type="Ensembl" id="ENST00000371634.7">
    <property type="protein sequence ID" value="ENSP00000360697.3"/>
    <property type="gene ID" value="ENSG00000176919.13"/>
</dbReference>
<dbReference type="GeneID" id="733"/>
<dbReference type="KEGG" id="hsa:733"/>
<dbReference type="MANE-Select" id="ENST00000371634.7">
    <property type="protein sequence ID" value="ENSP00000360697.3"/>
    <property type="RefSeq nucleotide sequence ID" value="NM_000606.3"/>
    <property type="RefSeq protein sequence ID" value="NP_000597.2"/>
</dbReference>
<dbReference type="UCSC" id="uc004cka.3">
    <property type="organism name" value="human"/>
</dbReference>
<dbReference type="AGR" id="HGNC:1354"/>
<dbReference type="CTD" id="733"/>
<dbReference type="DisGeNET" id="733"/>
<dbReference type="GeneCards" id="C8G"/>
<dbReference type="HGNC" id="HGNC:1354">
    <property type="gene designation" value="C8G"/>
</dbReference>
<dbReference type="HPA" id="ENSG00000176919">
    <property type="expression patterns" value="Tissue enriched (liver)"/>
</dbReference>
<dbReference type="MalaCards" id="C8G"/>
<dbReference type="MIM" id="120930">
    <property type="type" value="gene"/>
</dbReference>
<dbReference type="neXtProt" id="NX_P07360"/>
<dbReference type="OpenTargets" id="ENSG00000176919"/>
<dbReference type="Orphanet" id="169150">
    <property type="disease" value="Immunodeficiency due to a late component of complement deficiency"/>
</dbReference>
<dbReference type="PharmGKB" id="PA25953"/>
<dbReference type="VEuPathDB" id="HostDB:ENSG00000176919"/>
<dbReference type="eggNOG" id="ENOG502S0KX">
    <property type="taxonomic scope" value="Eukaryota"/>
</dbReference>
<dbReference type="GeneTree" id="ENSGT00440000034309"/>
<dbReference type="HOGENOM" id="CLU_094061_0_0_1"/>
<dbReference type="InParanoid" id="P07360"/>
<dbReference type="OMA" id="YPVYGFC"/>
<dbReference type="OrthoDB" id="9941609at2759"/>
<dbReference type="PAN-GO" id="P07360">
    <property type="GO annotations" value="1 GO annotation based on evolutionary models"/>
</dbReference>
<dbReference type="PhylomeDB" id="P07360"/>
<dbReference type="TreeFam" id="TF336103"/>
<dbReference type="PathwayCommons" id="P07360"/>
<dbReference type="Reactome" id="R-HSA-166665">
    <property type="pathway name" value="Terminal pathway of complement"/>
</dbReference>
<dbReference type="Reactome" id="R-HSA-977606">
    <property type="pathway name" value="Regulation of Complement cascade"/>
</dbReference>
<dbReference type="SignaLink" id="P07360"/>
<dbReference type="SIGNOR" id="P07360"/>
<dbReference type="BioGRID-ORCS" id="733">
    <property type="hits" value="27 hits in 1145 CRISPR screens"/>
</dbReference>
<dbReference type="EvolutionaryTrace" id="P07360"/>
<dbReference type="GenomeRNAi" id="733"/>
<dbReference type="Pharos" id="P07360">
    <property type="development level" value="Tbio"/>
</dbReference>
<dbReference type="PRO" id="PR:P07360"/>
<dbReference type="Proteomes" id="UP000005640">
    <property type="component" value="Chromosome 9"/>
</dbReference>
<dbReference type="RNAct" id="P07360">
    <property type="molecule type" value="protein"/>
</dbReference>
<dbReference type="Bgee" id="ENSG00000176919">
    <property type="expression patterns" value="Expressed in right lobe of liver and 94 other cell types or tissues"/>
</dbReference>
<dbReference type="ExpressionAtlas" id="P07360">
    <property type="expression patterns" value="baseline and differential"/>
</dbReference>
<dbReference type="GO" id="GO:0072562">
    <property type="term" value="C:blood microparticle"/>
    <property type="evidence" value="ECO:0007005"/>
    <property type="project" value="UniProtKB"/>
</dbReference>
<dbReference type="GO" id="GO:0070062">
    <property type="term" value="C:extracellular exosome"/>
    <property type="evidence" value="ECO:0007005"/>
    <property type="project" value="UniProtKB"/>
</dbReference>
<dbReference type="GO" id="GO:0005576">
    <property type="term" value="C:extracellular region"/>
    <property type="evidence" value="ECO:0000304"/>
    <property type="project" value="Reactome"/>
</dbReference>
<dbReference type="GO" id="GO:0005579">
    <property type="term" value="C:membrane attack complex"/>
    <property type="evidence" value="ECO:0000353"/>
    <property type="project" value="ComplexPortal"/>
</dbReference>
<dbReference type="GO" id="GO:0005886">
    <property type="term" value="C:plasma membrane"/>
    <property type="evidence" value="ECO:0000303"/>
    <property type="project" value="ComplexPortal"/>
</dbReference>
<dbReference type="GO" id="GO:0019841">
    <property type="term" value="F:retinol binding"/>
    <property type="evidence" value="ECO:0007669"/>
    <property type="project" value="UniProtKB-KW"/>
</dbReference>
<dbReference type="GO" id="GO:0006957">
    <property type="term" value="P:complement activation, alternative pathway"/>
    <property type="evidence" value="ECO:0007669"/>
    <property type="project" value="UniProtKB-KW"/>
</dbReference>
<dbReference type="GO" id="GO:0006958">
    <property type="term" value="P:complement activation, classical pathway"/>
    <property type="evidence" value="ECO:0007669"/>
    <property type="project" value="UniProtKB-KW"/>
</dbReference>
<dbReference type="GO" id="GO:0031640">
    <property type="term" value="P:killing of cells of another organism"/>
    <property type="evidence" value="ECO:0007669"/>
    <property type="project" value="UniProtKB-KW"/>
</dbReference>
<dbReference type="GO" id="GO:0050778">
    <property type="term" value="P:positive regulation of immune response"/>
    <property type="evidence" value="ECO:0000303"/>
    <property type="project" value="ComplexPortal"/>
</dbReference>
<dbReference type="CDD" id="cd19417">
    <property type="entry name" value="lipocalin_C8gamma"/>
    <property type="match status" value="1"/>
</dbReference>
<dbReference type="FunFam" id="2.40.128.20:FF:000015">
    <property type="entry name" value="Complement component C8 gamma chain"/>
    <property type="match status" value="1"/>
</dbReference>
<dbReference type="Gene3D" id="2.40.128.20">
    <property type="match status" value="1"/>
</dbReference>
<dbReference type="InterPro" id="IPR002968">
    <property type="entry name" value="A1-microglobln"/>
</dbReference>
<dbReference type="InterPro" id="IPR043245">
    <property type="entry name" value="C8G"/>
</dbReference>
<dbReference type="InterPro" id="IPR012674">
    <property type="entry name" value="Calycin"/>
</dbReference>
<dbReference type="InterPro" id="IPR022272">
    <property type="entry name" value="Lipocalin_CS"/>
</dbReference>
<dbReference type="InterPro" id="IPR000566">
    <property type="entry name" value="Lipocln_cytosolic_FA-bd_dom"/>
</dbReference>
<dbReference type="PANTHER" id="PTHR47304">
    <property type="entry name" value="COMPLEMENT COMPONENT C8 GAMMA CHAIN"/>
    <property type="match status" value="1"/>
</dbReference>
<dbReference type="PANTHER" id="PTHR47304:SF1">
    <property type="entry name" value="COMPLEMENT COMPONENT C8 GAMMA CHAIN"/>
    <property type="match status" value="1"/>
</dbReference>
<dbReference type="Pfam" id="PF00061">
    <property type="entry name" value="Lipocalin"/>
    <property type="match status" value="1"/>
</dbReference>
<dbReference type="PRINTS" id="PR01215">
    <property type="entry name" value="A1MCGLOBULIN"/>
</dbReference>
<dbReference type="PRINTS" id="PR00179">
    <property type="entry name" value="LIPOCALIN"/>
</dbReference>
<dbReference type="SUPFAM" id="SSF50814">
    <property type="entry name" value="Lipocalins"/>
    <property type="match status" value="1"/>
</dbReference>
<dbReference type="PROSITE" id="PS00213">
    <property type="entry name" value="LIPOCALIN"/>
    <property type="match status" value="1"/>
</dbReference>
<protein>
    <recommendedName>
        <fullName evidence="17">Complement component C8 gamma chain</fullName>
    </recommendedName>
</protein>
<accession>P07360</accession>
<accession>Q14CT8</accession>
<accession>Q14CU0</accession>
<accession>Q5SQ07</accession>
<comment type="function">
    <text evidence="7 8 9 14">Component of the membrane attack complex (MAC), a multiprotein complex activated by the complement cascade, which inserts into a target cell membrane and forms a pore, leading to target cell membrane rupture and cell lysis (PubMed:26841837, PubMed:27052168, PubMed:30552328). The MAC is initiated by proteolytic cleavage of C5 into complement C5b in response to the classical, alternative, lectin and GZMK complement pathways (PubMed:30552328). The complement pathways consist in a cascade of proteins that leads to phagocytosis and breakdown of pathogens and signaling that strengthens the adaptive immune system (PubMed:30552328). C8G, together with C8A and C8B, inserts into the target membrane, but does not form pores by itself (PubMed:30552328). During MAC assembly, associates with C5b, C6 and C7 to form the C5b8 intermediate complex that inserts into the target membrane and traverses the bilayer increasing membrane rigidity (PubMed:30552328, PubMed:6833260).</text>
</comment>
<comment type="activity regulation">
    <text evidence="11 13">Membrane attack complex (MAC) assembly is inhibited by CD59, thereby protecting self-cells from damage during complement activation (PubMed:36797260). MAC assembly is also inhibited by clusterin (CLU) chaperones that inhibit polymerization of C9 (PubMed:34667172).</text>
</comment>
<comment type="subunit">
    <text evidence="4 5 7 8 9 10">Heterotrimer of 3 chains: alpha (C8A), beta (C8B) and gamma (C8G); the alpha and gamma chains are disulfide bonded (PubMed:17692377, PubMed:21454577). Component of the membrane attack complex (MAC), composed of complement C5b, C6, C7, C8A, C8B, C8G and multiple copies of the pore-forming subunit C9 (PubMed:26841837, PubMed:27052168, PubMed:30552328, PubMed:31061395).</text>
</comment>
<comment type="interaction">
    <interactant intactId="EBI-9021652">
        <id>P07360</id>
    </interactant>
    <interactant intactId="EBI-947187">
        <id>Q9UHD9</id>
        <label>UBQLN2</label>
    </interactant>
    <organismsDiffer>false</organismsDiffer>
    <experiments>3</experiments>
</comment>
<comment type="subcellular location">
    <subcellularLocation>
        <location evidence="12">Secreted</location>
    </subcellularLocation>
    <subcellularLocation>
        <location evidence="9 10">Target cell membrane</location>
    </subcellularLocation>
    <text evidence="9 10">Secreted as soluble protein (PubMed:30552328). Inserts into the cell membrane of target cells (PubMed:30552328, PubMed:31061395).</text>
</comment>
<comment type="similarity">
    <text evidence="18">Belongs to the calycin superfamily. Lipocalin family.</text>
</comment>
<feature type="signal peptide">
    <location>
        <begin position="1"/>
        <end position="20"/>
    </location>
</feature>
<feature type="chain" id="PRO_0000017881" description="Complement component C8 gamma chain">
    <location>
        <begin position="21"/>
        <end position="202"/>
    </location>
</feature>
<feature type="modified residue" description="Pyrrolidone carboxylic acid" evidence="12">
    <location>
        <position position="21"/>
    </location>
</feature>
<feature type="disulfide bond" description="Interchain (with C-194 in C8-alpha chain)" evidence="1 3 4">
    <location>
        <position position="60"/>
    </location>
</feature>
<feature type="disulfide bond" evidence="1 3 4 5 9 21 22 23">
    <location>
        <begin position="96"/>
        <end position="188"/>
    </location>
</feature>
<feature type="sequence variant" id="VAR_014668" description="In dbSNP:rs17614.">
    <original>R</original>
    <variation>Q</variation>
    <location>
        <position position="69"/>
    </location>
</feature>
<feature type="sequence variant" id="VAR_044319" description="In dbSNP:rs7850844." evidence="2 6 12 15 16">
    <original>D</original>
    <variation>G</variation>
    <location>
        <position position="118"/>
    </location>
</feature>
<feature type="sequence variant" id="VAR_014669" description="In dbSNP:rs17613." evidence="2">
    <original>H</original>
    <variation>N</variation>
    <location>
        <position position="124"/>
    </location>
</feature>
<feature type="helix" evidence="29">
    <location>
        <begin position="32"/>
        <end position="35"/>
    </location>
</feature>
<feature type="helix" evidence="29">
    <location>
        <begin position="44"/>
        <end position="47"/>
    </location>
</feature>
<feature type="strand" evidence="29">
    <location>
        <begin position="49"/>
        <end position="57"/>
    </location>
</feature>
<feature type="helix" evidence="30">
    <location>
        <begin position="61"/>
        <end position="66"/>
    </location>
</feature>
<feature type="helix" evidence="30">
    <location>
        <begin position="67"/>
        <end position="69"/>
    </location>
</feature>
<feature type="strand" evidence="29">
    <location>
        <begin position="73"/>
        <end position="80"/>
    </location>
</feature>
<feature type="strand" evidence="29">
    <location>
        <begin position="83"/>
        <end position="92"/>
    </location>
</feature>
<feature type="strand" evidence="29">
    <location>
        <begin position="95"/>
        <end position="105"/>
    </location>
</feature>
<feature type="strand" evidence="29">
    <location>
        <begin position="111"/>
        <end position="114"/>
    </location>
</feature>
<feature type="strand" evidence="29">
    <location>
        <begin position="117"/>
        <end position="121"/>
    </location>
</feature>
<feature type="strand" evidence="29">
    <location>
        <begin position="123"/>
        <end position="130"/>
    </location>
</feature>
<feature type="strand" evidence="29">
    <location>
        <begin position="132"/>
        <end position="142"/>
    </location>
</feature>
<feature type="strand" evidence="29">
    <location>
        <begin position="145"/>
        <end position="156"/>
    </location>
</feature>
<feature type="helix" evidence="29">
    <location>
        <begin position="159"/>
        <end position="171"/>
    </location>
</feature>
<feature type="helix" evidence="29">
    <location>
        <begin position="176"/>
        <end position="178"/>
    </location>
</feature>
<feature type="strand" evidence="29">
    <location>
        <begin position="179"/>
        <end position="181"/>
    </location>
</feature>
<feature type="helix" evidence="29">
    <location>
        <begin position="193"/>
        <end position="195"/>
    </location>
</feature>
<feature type="strand" evidence="29">
    <location>
        <begin position="196"/>
        <end position="198"/>
    </location>
</feature>
<keyword id="KW-0002">3D-structure</keyword>
<keyword id="KW-0179">Complement alternate pathway</keyword>
<keyword id="KW-0180">Complement pathway</keyword>
<keyword id="KW-0204">Cytolysis</keyword>
<keyword id="KW-0903">Direct protein sequencing</keyword>
<keyword id="KW-1015">Disulfide bond</keyword>
<keyword id="KW-0391">Immunity</keyword>
<keyword id="KW-0399">Innate immunity</keyword>
<keyword id="KW-0472">Membrane</keyword>
<keyword id="KW-0473">Membrane attack complex</keyword>
<keyword id="KW-1267">Proteomics identification</keyword>
<keyword id="KW-0873">Pyrrolidone carboxylic acid</keyword>
<keyword id="KW-1185">Reference proteome</keyword>
<keyword id="KW-0683">Retinol-binding</keyword>
<keyword id="KW-0964">Secreted</keyword>
<keyword id="KW-0732">Signal</keyword>
<keyword id="KW-1052">Target cell membrane</keyword>
<keyword id="KW-1053">Target membrane</keyword>
<organism>
    <name type="scientific">Homo sapiens</name>
    <name type="common">Human</name>
    <dbReference type="NCBI Taxonomy" id="9606"/>
    <lineage>
        <taxon>Eukaryota</taxon>
        <taxon>Metazoa</taxon>
        <taxon>Chordata</taxon>
        <taxon>Craniata</taxon>
        <taxon>Vertebrata</taxon>
        <taxon>Euteleostomi</taxon>
        <taxon>Mammalia</taxon>
        <taxon>Eutheria</taxon>
        <taxon>Euarchontoglires</taxon>
        <taxon>Primates</taxon>
        <taxon>Haplorrhini</taxon>
        <taxon>Catarrhini</taxon>
        <taxon>Hominidae</taxon>
        <taxon>Homo</taxon>
    </lineage>
</organism>
<gene>
    <name evidence="19" type="primary">C8G</name>
</gene>
<proteinExistence type="evidence at protein level"/>
<reference key="1">
    <citation type="journal article" date="1987" name="Biochemistry">
        <title>The eighth component of human complement: evidence that it is an oligomeric serum protein assembled from products of three different genes.</title>
        <authorList>
            <person name="Ng S.C."/>
            <person name="Rao A.G."/>
            <person name="Howard O.M.Z."/>
            <person name="Sodetz J.M."/>
        </authorList>
    </citation>
    <scope>NUCLEOTIDE SEQUENCE [MRNA]</scope>
    <scope>PARTIAL PROTEIN SEQUENCE</scope>
    <scope>SUBCELLULAR LOCATION</scope>
    <scope>PYROGLUTAMATE FORMATION AT GLN-21</scope>
    <scope>VARIANT GLY-118</scope>
</reference>
<reference key="2">
    <citation type="journal article" date="1987" name="Biochem. Biophys. Res. Commun.">
        <title>Structural homology of human complement component C8 gamma and plasma protein HC: identity of the cysteine bond pattern.</title>
        <authorList>
            <person name="Haefliger J.-A."/>
            <person name="Jenne D.E."/>
            <person name="Stanley K.K."/>
            <person name="Tschopp J."/>
        </authorList>
    </citation>
    <scope>NUCLEOTIDE SEQUENCE [MRNA]</scope>
    <scope>VARIANT GLY-118</scope>
    <source>
        <tissue>Liver</tissue>
    </source>
</reference>
<reference key="3">
    <citation type="journal article" date="1994" name="Biochemistry">
        <title>Genomic structure of the human complement protein C8 gamma: homology to the lipocalin gene family.</title>
        <authorList>
            <person name="Kaufman K.M."/>
            <person name="Sodetz J.M."/>
        </authorList>
    </citation>
    <scope>NUCLEOTIDE SEQUENCE [GENOMIC DNA]</scope>
    <scope>VARIANT GLY-118</scope>
    <source>
        <tissue>Blood</tissue>
    </source>
</reference>
<reference key="4">
    <citation type="journal article" date="2004" name="Nature">
        <title>DNA sequence and analysis of human chromosome 9.</title>
        <authorList>
            <person name="Humphray S.J."/>
            <person name="Oliver K."/>
            <person name="Hunt A.R."/>
            <person name="Plumb R.W."/>
            <person name="Loveland J.E."/>
            <person name="Howe K.L."/>
            <person name="Andrews T.D."/>
            <person name="Searle S."/>
            <person name="Hunt S.E."/>
            <person name="Scott C.E."/>
            <person name="Jones M.C."/>
            <person name="Ainscough R."/>
            <person name="Almeida J.P."/>
            <person name="Ambrose K.D."/>
            <person name="Ashwell R.I.S."/>
            <person name="Babbage A.K."/>
            <person name="Babbage S."/>
            <person name="Bagguley C.L."/>
            <person name="Bailey J."/>
            <person name="Banerjee R."/>
            <person name="Barker D.J."/>
            <person name="Barlow K.F."/>
            <person name="Bates K."/>
            <person name="Beasley H."/>
            <person name="Beasley O."/>
            <person name="Bird C.P."/>
            <person name="Bray-Allen S."/>
            <person name="Brown A.J."/>
            <person name="Brown J.Y."/>
            <person name="Burford D."/>
            <person name="Burrill W."/>
            <person name="Burton J."/>
            <person name="Carder C."/>
            <person name="Carter N.P."/>
            <person name="Chapman J.C."/>
            <person name="Chen Y."/>
            <person name="Clarke G."/>
            <person name="Clark S.Y."/>
            <person name="Clee C.M."/>
            <person name="Clegg S."/>
            <person name="Collier R.E."/>
            <person name="Corby N."/>
            <person name="Crosier M."/>
            <person name="Cummings A.T."/>
            <person name="Davies J."/>
            <person name="Dhami P."/>
            <person name="Dunn M."/>
            <person name="Dutta I."/>
            <person name="Dyer L.W."/>
            <person name="Earthrowl M.E."/>
            <person name="Faulkner L."/>
            <person name="Fleming C.J."/>
            <person name="Frankish A."/>
            <person name="Frankland J.A."/>
            <person name="French L."/>
            <person name="Fricker D.G."/>
            <person name="Garner P."/>
            <person name="Garnett J."/>
            <person name="Ghori J."/>
            <person name="Gilbert J.G.R."/>
            <person name="Glison C."/>
            <person name="Grafham D.V."/>
            <person name="Gribble S."/>
            <person name="Griffiths C."/>
            <person name="Griffiths-Jones S."/>
            <person name="Grocock R."/>
            <person name="Guy J."/>
            <person name="Hall R.E."/>
            <person name="Hammond S."/>
            <person name="Harley J.L."/>
            <person name="Harrison E.S.I."/>
            <person name="Hart E.A."/>
            <person name="Heath P.D."/>
            <person name="Henderson C.D."/>
            <person name="Hopkins B.L."/>
            <person name="Howard P.J."/>
            <person name="Howden P.J."/>
            <person name="Huckle E."/>
            <person name="Johnson C."/>
            <person name="Johnson D."/>
            <person name="Joy A.A."/>
            <person name="Kay M."/>
            <person name="Keenan S."/>
            <person name="Kershaw J.K."/>
            <person name="Kimberley A.M."/>
            <person name="King A."/>
            <person name="Knights A."/>
            <person name="Laird G.K."/>
            <person name="Langford C."/>
            <person name="Lawlor S."/>
            <person name="Leongamornlert D.A."/>
            <person name="Leversha M."/>
            <person name="Lloyd C."/>
            <person name="Lloyd D.M."/>
            <person name="Lovell J."/>
            <person name="Martin S."/>
            <person name="Mashreghi-Mohammadi M."/>
            <person name="Matthews L."/>
            <person name="McLaren S."/>
            <person name="McLay K.E."/>
            <person name="McMurray A."/>
            <person name="Milne S."/>
            <person name="Nickerson T."/>
            <person name="Nisbett J."/>
            <person name="Nordsiek G."/>
            <person name="Pearce A.V."/>
            <person name="Peck A.I."/>
            <person name="Porter K.M."/>
            <person name="Pandian R."/>
            <person name="Pelan S."/>
            <person name="Phillimore B."/>
            <person name="Povey S."/>
            <person name="Ramsey Y."/>
            <person name="Rand V."/>
            <person name="Scharfe M."/>
            <person name="Sehra H.K."/>
            <person name="Shownkeen R."/>
            <person name="Sims S.K."/>
            <person name="Skuce C.D."/>
            <person name="Smith M."/>
            <person name="Steward C.A."/>
            <person name="Swarbreck D."/>
            <person name="Sycamore N."/>
            <person name="Tester J."/>
            <person name="Thorpe A."/>
            <person name="Tracey A."/>
            <person name="Tromans A."/>
            <person name="Thomas D.W."/>
            <person name="Wall M."/>
            <person name="Wallis J.M."/>
            <person name="West A.P."/>
            <person name="Whitehead S.L."/>
            <person name="Willey D.L."/>
            <person name="Williams S.A."/>
            <person name="Wilming L."/>
            <person name="Wray P.W."/>
            <person name="Young L."/>
            <person name="Ashurst J.L."/>
            <person name="Coulson A."/>
            <person name="Blocker H."/>
            <person name="Durbin R.M."/>
            <person name="Sulston J.E."/>
            <person name="Hubbard T."/>
            <person name="Jackson M.J."/>
            <person name="Bentley D.R."/>
            <person name="Beck S."/>
            <person name="Rogers J."/>
            <person name="Dunham I."/>
        </authorList>
    </citation>
    <scope>NUCLEOTIDE SEQUENCE [LARGE SCALE GENOMIC DNA]</scope>
</reference>
<reference key="5">
    <citation type="submission" date="2005-07" db="EMBL/GenBank/DDBJ databases">
        <authorList>
            <person name="Mural R.J."/>
            <person name="Istrail S."/>
            <person name="Sutton G.G."/>
            <person name="Florea L."/>
            <person name="Halpern A.L."/>
            <person name="Mobarry C.M."/>
            <person name="Lippert R."/>
            <person name="Walenz B."/>
            <person name="Shatkay H."/>
            <person name="Dew I."/>
            <person name="Miller J.R."/>
            <person name="Flanigan M.J."/>
            <person name="Edwards N.J."/>
            <person name="Bolanos R."/>
            <person name="Fasulo D."/>
            <person name="Halldorsson B.V."/>
            <person name="Hannenhalli S."/>
            <person name="Turner R."/>
            <person name="Yooseph S."/>
            <person name="Lu F."/>
            <person name="Nusskern D.R."/>
            <person name="Shue B.C."/>
            <person name="Zheng X.H."/>
            <person name="Zhong F."/>
            <person name="Delcher A.L."/>
            <person name="Huson D.H."/>
            <person name="Kravitz S.A."/>
            <person name="Mouchard L."/>
            <person name="Reinert K."/>
            <person name="Remington K.A."/>
            <person name="Clark A.G."/>
            <person name="Waterman M.S."/>
            <person name="Eichler E.E."/>
            <person name="Adams M.D."/>
            <person name="Hunkapiller M.W."/>
            <person name="Myers E.W."/>
            <person name="Venter J.C."/>
        </authorList>
    </citation>
    <scope>NUCLEOTIDE SEQUENCE [LARGE SCALE GENOMIC DNA]</scope>
    <scope>VARIANT GLY-118</scope>
</reference>
<reference key="6">
    <citation type="journal article" date="2004" name="Genome Res.">
        <title>The status, quality, and expansion of the NIH full-length cDNA project: the Mammalian Gene Collection (MGC).</title>
        <authorList>
            <consortium name="The MGC Project Team"/>
        </authorList>
    </citation>
    <scope>NUCLEOTIDE SEQUENCE [LARGE SCALE MRNA]</scope>
    <scope>VARIANTS GLY-118 AND ASN-124</scope>
    <source>
        <tissue>Colon</tissue>
    </source>
</reference>
<reference key="7">
    <citation type="journal article" date="1983" name="J. Biol. Chem.">
        <title>Evidence of direct insertion of terminal complement proteins into cell membrane bilayers during cytolysis. Labeling by a photosensitive membrane probe reveals a major role for the eighth and ninth components.</title>
        <authorList>
            <person name="Steckel E.W."/>
            <person name="Welbaum B.E."/>
            <person name="Sodetz J.M."/>
        </authorList>
    </citation>
    <scope>FUNCTION</scope>
</reference>
<reference key="8">
    <citation type="journal article" date="1987" name="Biochem. Biophys. Res. Commun.">
        <title>The homology of complement factor C8 gamma chain and alpha-1-microglobulin.</title>
        <authorList>
            <person name="Hunt L.T."/>
            <person name="Elzanowski A."/>
            <person name="Barker W.C."/>
        </authorList>
    </citation>
    <scope>SIMILARITY TO LIPOCALINS</scope>
</reference>
<reference key="9">
    <citation type="journal article" date="1991" name="Mol. Immunol.">
        <title>Structural and functional characterization of complement C8 gamma, a member of the lipocalin protein family.</title>
        <authorList>
            <person name="Haefliger J.-A."/>
            <person name="Peitsch M.C."/>
            <person name="Jenne D.E."/>
            <person name="Tschopp J."/>
        </authorList>
    </citation>
    <scope>DISULFIDE BONDS</scope>
    <scope>RETINOL-BINDING</scope>
    <scope>3D-STRUCTURE MODELING</scope>
</reference>
<reference key="10">
    <citation type="journal article" date="2000" name="Biochim. Biophys. Acta">
        <title>Human complement protein C8 gamma.</title>
        <authorList>
            <person name="Schreck S.F."/>
            <person name="Parker C."/>
            <person name="Plumb M.E."/>
            <person name="Sodetz J.M."/>
        </authorList>
    </citation>
    <scope>REVIEW</scope>
</reference>
<reference key="11">
    <citation type="journal article" date="2014" name="J. Proteomics">
        <title>An enzyme assisted RP-RPLC approach for in-depth analysis of human liver phosphoproteome.</title>
        <authorList>
            <person name="Bian Y."/>
            <person name="Song C."/>
            <person name="Cheng K."/>
            <person name="Dong M."/>
            <person name="Wang F."/>
            <person name="Huang J."/>
            <person name="Sun D."/>
            <person name="Wang L."/>
            <person name="Ye M."/>
            <person name="Zou H."/>
        </authorList>
    </citation>
    <scope>IDENTIFICATION BY MASS SPECTROMETRY [LARGE SCALE ANALYSIS]</scope>
    <source>
        <tissue>Liver</tissue>
    </source>
</reference>
<reference key="12">
    <citation type="journal article" date="2016" name="Cell Rep.">
        <title>Heterogeneous MAC initiator and pore structures in a lipid bilayer by phase-plate cryo-electron tomography.</title>
        <authorList>
            <person name="Sharp T.H."/>
            <person name="Koster A.J."/>
            <person name="Gros P."/>
        </authorList>
    </citation>
    <scope>FUNCTION</scope>
    <scope>SUBUNIT</scope>
</reference>
<reference key="13">
    <citation type="journal article" date="2016" name="Nat. Commun.">
        <title>Structural basis of complement membrane attack complex formation.</title>
        <authorList>
            <person name="Serna M."/>
            <person name="Giles J.L."/>
            <person name="Morgan B.P."/>
            <person name="Bubeck D."/>
        </authorList>
    </citation>
    <scope>FUNCTION</scope>
    <scope>SUBUNIT</scope>
</reference>
<reference key="14">
    <citation type="journal article" date="2019" name="Nat. Commun.">
        <title>Single-molecule kinetics of pore assembly by the membrane attack complex.</title>
        <authorList>
            <person name="Parsons E.S."/>
            <person name="Stanley G.J."/>
            <person name="Pyne A.L.B."/>
            <person name="Hodel A.W."/>
            <person name="Nievergelt A.P."/>
            <person name="Menny A."/>
            <person name="Yon A.R."/>
            <person name="Rowley A."/>
            <person name="Richter R.P."/>
            <person name="Fantner G.E."/>
            <person name="Bubeck D."/>
            <person name="Hoogenboom B.W."/>
        </authorList>
    </citation>
    <scope>FUNCTION</scope>
    <scope>SUBUNIT</scope>
</reference>
<reference key="15">
    <citation type="journal article" date="2002" name="Biochemistry">
        <title>Crystal structure of human complement protein C8gamma at 1.2 A resolution reveals a lipocalin fold and a distinct ligand binding site.</title>
        <authorList>
            <person name="Ortlund E."/>
            <person name="Parker C.L."/>
            <person name="Schreck S.F."/>
            <person name="Ginell S."/>
            <person name="Minor W."/>
            <person name="Sodetz J.M."/>
            <person name="Lebioda L."/>
        </authorList>
    </citation>
    <scope>X-RAY CRYSTALLOGRAPHY (1.2 ANGSTROMS) OF 21-202</scope>
    <scope>DISULFIDE BOND</scope>
</reference>
<reference key="16">
    <citation type="journal article" date="2007" name="Biochim. Biophys. Acta">
        <title>Structural features of the ligand binding site on human complement protein C8gamma: a member of the lipocalin family.</title>
        <authorList>
            <person name="Chiswell B."/>
            <person name="Lovelace L.L."/>
            <person name="Brannen C."/>
            <person name="Ortlund E.A."/>
            <person name="Lebioda L."/>
            <person name="Sodetz J.M."/>
        </authorList>
    </citation>
    <scope>X-RAY CRYSTALLOGRAPHY (1.5 ANGSTROMS) OF 21-202</scope>
    <scope>DISULFIDE BOND</scope>
</reference>
<reference key="17">
    <citation type="journal article" date="2008" name="Mol. Immunol.">
        <title>Crystal structure of complement protein C8gamma in complex with a peptide containing the C8gamma binding site on C8alpha: implications for C8gamma ligand binding.</title>
        <authorList>
            <person name="Lovelace L.L."/>
            <person name="Chiswell B."/>
            <person name="Slade D.J."/>
            <person name="Sodetz J.M."/>
            <person name="Lebioda L."/>
        </authorList>
    </citation>
    <scope>X-RAY CRYSTALLOGRAPHY (1.81 ANGSTROMS) OF 30-202</scope>
    <scope>SUBUNIT</scope>
    <scope>DISULFIDE BOND</scope>
</reference>
<reference evidence="20 21" key="18">
    <citation type="journal article" date="2011" name="J. Biol. Chem.">
        <title>Structure of human C8 protein provides mechanistic insight into membrane pore formation by complement.</title>
        <authorList>
            <person name="Lovelace L.L."/>
            <person name="Cooper C.L."/>
            <person name="Sodetz J.M."/>
            <person name="Lebioda L."/>
        </authorList>
    </citation>
    <scope>X-RAY CRYSTALLOGRAPHY (2.15 ANGSTROMS) OF 21-202 IN COMPLEX WITH C8A AND C8B</scope>
    <scope>SUBUNIT</scope>
    <scope>DISULFIDE BOND</scope>
</reference>
<reference evidence="22 23" key="19">
    <citation type="journal article" date="2018" name="Nat. Commun.">
        <title>CryoEM reveals how the complement membrane attack complex ruptures lipid bilayers.</title>
        <authorList>
            <person name="Menny A."/>
            <person name="Serna M."/>
            <person name="Boyd C.M."/>
            <person name="Gardner S."/>
            <person name="Joseph A.P."/>
            <person name="Morgan B.P."/>
            <person name="Topf M."/>
            <person name="Brooks N.J."/>
            <person name="Bubeck D."/>
        </authorList>
    </citation>
    <scope>STRUCTURE BY ELECTRON MICROSCOPY (5.60 ANGSTROMS) OF 21-202 OF MEMBRANE ATTACK COMPLEX</scope>
    <scope>FUNCTION</scope>
    <scope>SUBCELLULAR LOCATION</scope>
    <scope>SUBUNIT</scope>
    <scope>DISULFIDE BOND</scope>
</reference>
<reference evidence="24 25" key="20">
    <citation type="journal article" date="2021" name="Nat. Commun.">
        <title>Structural basis of soluble membrane attack complex packaging for clearance.</title>
        <authorList>
            <person name="Menny A."/>
            <person name="Lukassen M.V."/>
            <person name="Couves E.C."/>
            <person name="Franc V."/>
            <person name="Heck A.J.R."/>
            <person name="Bubeck D."/>
        </authorList>
    </citation>
    <scope>STRUCTURE BY ELECTRON MICROSCOPY (3.27 ANGSTROMS) OF 21-202 OF MEMBRANE ATTACK COMPLEX</scope>
    <scope>ACTIVITY REGULATION</scope>
</reference>
<reference evidence="26 27 28" key="21">
    <citation type="journal article" date="2023" name="Nat. Commun.">
        <title>Structural basis for membrane attack complex inhibition by CD59.</title>
        <authorList>
            <person name="Couves E.C."/>
            <person name="Gardner S."/>
            <person name="Voisin T.B."/>
            <person name="Bickel J.K."/>
            <person name="Stansfeld P.J."/>
            <person name="Tate E.W."/>
            <person name="Bubeck D."/>
        </authorList>
    </citation>
    <scope>STRUCTURE BY ELECTRON MICROSCOPY (3.00 ANGSTROMS) IN COMPLEX WITH THE MEMBRANE ATTACK COMPLEX</scope>
    <scope>ACTIVITY REGULATION</scope>
</reference>
<sequence length="202" mass="22277">MLPPGTATLLTLLLAAGSLGQKPQRPRRPASPISTIQPKANFDAQQFAGTWLLVAVGSACRFLQEQGHRAEATTLHVAPQGTAMAVSTFRKLDGICWQVRQLYGDTGVLGRFLLQARDARGAVHVVVAETDYQSFAVLYLERAGQLSVKLYARSLPVSDSVLSGFEQRVQEAHLTEDQIFYFPKYGFCEAADQFHVLDEVRR</sequence>
<evidence type="ECO:0000269" key="1">
    <source>
    </source>
</evidence>
<evidence type="ECO:0000269" key="2">
    <source>
    </source>
</evidence>
<evidence type="ECO:0000269" key="3">
    <source>
    </source>
</evidence>
<evidence type="ECO:0000269" key="4">
    <source>
    </source>
</evidence>
<evidence type="ECO:0000269" key="5">
    <source>
    </source>
</evidence>
<evidence type="ECO:0000269" key="6">
    <source>
    </source>
</evidence>
<evidence type="ECO:0000269" key="7">
    <source>
    </source>
</evidence>
<evidence type="ECO:0000269" key="8">
    <source>
    </source>
</evidence>
<evidence type="ECO:0000269" key="9">
    <source>
    </source>
</evidence>
<evidence type="ECO:0000269" key="10">
    <source>
    </source>
</evidence>
<evidence type="ECO:0000269" key="11">
    <source>
    </source>
</evidence>
<evidence type="ECO:0000269" key="12">
    <source>
    </source>
</evidence>
<evidence type="ECO:0000269" key="13">
    <source>
    </source>
</evidence>
<evidence type="ECO:0000269" key="14">
    <source>
    </source>
</evidence>
<evidence type="ECO:0000269" key="15">
    <source>
    </source>
</evidence>
<evidence type="ECO:0000269" key="16">
    <source ref="5"/>
</evidence>
<evidence type="ECO:0000303" key="17">
    <source>
    </source>
</evidence>
<evidence type="ECO:0000305" key="18"/>
<evidence type="ECO:0000312" key="19">
    <source>
        <dbReference type="HGNC" id="HGNC:1354"/>
    </source>
</evidence>
<evidence type="ECO:0007744" key="20">
    <source>
        <dbReference type="PDB" id="2RD7"/>
    </source>
</evidence>
<evidence type="ECO:0007744" key="21">
    <source>
        <dbReference type="PDB" id="3OJY"/>
    </source>
</evidence>
<evidence type="ECO:0007744" key="22">
    <source>
        <dbReference type="PDB" id="6H03"/>
    </source>
</evidence>
<evidence type="ECO:0007744" key="23">
    <source>
        <dbReference type="PDB" id="6H04"/>
    </source>
</evidence>
<evidence type="ECO:0007744" key="24">
    <source>
        <dbReference type="PDB" id="7NYC"/>
    </source>
</evidence>
<evidence type="ECO:0007744" key="25">
    <source>
        <dbReference type="PDB" id="7NYD"/>
    </source>
</evidence>
<evidence type="ECO:0007744" key="26">
    <source>
        <dbReference type="PDB" id="8B0F"/>
    </source>
</evidence>
<evidence type="ECO:0007744" key="27">
    <source>
        <dbReference type="PDB" id="8B0G"/>
    </source>
</evidence>
<evidence type="ECO:0007744" key="28">
    <source>
        <dbReference type="PDB" id="8B0H"/>
    </source>
</evidence>
<evidence type="ECO:0007829" key="29">
    <source>
        <dbReference type="PDB" id="1LF7"/>
    </source>
</evidence>
<evidence type="ECO:0007829" key="30">
    <source>
        <dbReference type="PDB" id="2QOS"/>
    </source>
</evidence>